<dbReference type="EC" id="3.1.1.29" evidence="1"/>
<dbReference type="EMBL" id="CP000158">
    <property type="protein sequence ID" value="ABI75848.1"/>
    <property type="molecule type" value="Genomic_DNA"/>
</dbReference>
<dbReference type="RefSeq" id="WP_011646413.1">
    <property type="nucleotide sequence ID" value="NC_008358.1"/>
</dbReference>
<dbReference type="SMR" id="Q0C2D0"/>
<dbReference type="STRING" id="228405.HNE_1396"/>
<dbReference type="KEGG" id="hne:HNE_1396"/>
<dbReference type="eggNOG" id="COG0193">
    <property type="taxonomic scope" value="Bacteria"/>
</dbReference>
<dbReference type="HOGENOM" id="CLU_062456_1_1_5"/>
<dbReference type="Proteomes" id="UP000001959">
    <property type="component" value="Chromosome"/>
</dbReference>
<dbReference type="GO" id="GO:0005737">
    <property type="term" value="C:cytoplasm"/>
    <property type="evidence" value="ECO:0007669"/>
    <property type="project" value="UniProtKB-SubCell"/>
</dbReference>
<dbReference type="GO" id="GO:0004045">
    <property type="term" value="F:peptidyl-tRNA hydrolase activity"/>
    <property type="evidence" value="ECO:0007669"/>
    <property type="project" value="UniProtKB-UniRule"/>
</dbReference>
<dbReference type="GO" id="GO:0000049">
    <property type="term" value="F:tRNA binding"/>
    <property type="evidence" value="ECO:0007669"/>
    <property type="project" value="UniProtKB-UniRule"/>
</dbReference>
<dbReference type="GO" id="GO:0006515">
    <property type="term" value="P:protein quality control for misfolded or incompletely synthesized proteins"/>
    <property type="evidence" value="ECO:0007669"/>
    <property type="project" value="UniProtKB-UniRule"/>
</dbReference>
<dbReference type="GO" id="GO:0072344">
    <property type="term" value="P:rescue of stalled ribosome"/>
    <property type="evidence" value="ECO:0007669"/>
    <property type="project" value="UniProtKB-UniRule"/>
</dbReference>
<dbReference type="CDD" id="cd00462">
    <property type="entry name" value="PTH"/>
    <property type="match status" value="1"/>
</dbReference>
<dbReference type="Gene3D" id="3.40.50.1470">
    <property type="entry name" value="Peptidyl-tRNA hydrolase"/>
    <property type="match status" value="1"/>
</dbReference>
<dbReference type="HAMAP" id="MF_00083">
    <property type="entry name" value="Pept_tRNA_hydro_bact"/>
    <property type="match status" value="1"/>
</dbReference>
<dbReference type="InterPro" id="IPR001328">
    <property type="entry name" value="Pept_tRNA_hydro"/>
</dbReference>
<dbReference type="InterPro" id="IPR018171">
    <property type="entry name" value="Pept_tRNA_hydro_CS"/>
</dbReference>
<dbReference type="InterPro" id="IPR036416">
    <property type="entry name" value="Pept_tRNA_hydro_sf"/>
</dbReference>
<dbReference type="NCBIfam" id="TIGR00447">
    <property type="entry name" value="pth"/>
    <property type="match status" value="1"/>
</dbReference>
<dbReference type="PANTHER" id="PTHR17224">
    <property type="entry name" value="PEPTIDYL-TRNA HYDROLASE"/>
    <property type="match status" value="1"/>
</dbReference>
<dbReference type="PANTHER" id="PTHR17224:SF1">
    <property type="entry name" value="PEPTIDYL-TRNA HYDROLASE"/>
    <property type="match status" value="1"/>
</dbReference>
<dbReference type="Pfam" id="PF01195">
    <property type="entry name" value="Pept_tRNA_hydro"/>
    <property type="match status" value="1"/>
</dbReference>
<dbReference type="SUPFAM" id="SSF53178">
    <property type="entry name" value="Peptidyl-tRNA hydrolase-like"/>
    <property type="match status" value="1"/>
</dbReference>
<dbReference type="PROSITE" id="PS01195">
    <property type="entry name" value="PEPT_TRNA_HYDROL_1"/>
    <property type="match status" value="1"/>
</dbReference>
<comment type="function">
    <text evidence="1">Hydrolyzes ribosome-free peptidyl-tRNAs (with 1 or more amino acids incorporated), which drop off the ribosome during protein synthesis, or as a result of ribosome stalling.</text>
</comment>
<comment type="function">
    <text evidence="1">Catalyzes the release of premature peptidyl moieties from peptidyl-tRNA molecules trapped in stalled 50S ribosomal subunits, and thus maintains levels of free tRNAs and 50S ribosomes.</text>
</comment>
<comment type="catalytic activity">
    <reaction evidence="1">
        <text>an N-acyl-L-alpha-aminoacyl-tRNA + H2O = an N-acyl-L-amino acid + a tRNA + H(+)</text>
        <dbReference type="Rhea" id="RHEA:54448"/>
        <dbReference type="Rhea" id="RHEA-COMP:10123"/>
        <dbReference type="Rhea" id="RHEA-COMP:13883"/>
        <dbReference type="ChEBI" id="CHEBI:15377"/>
        <dbReference type="ChEBI" id="CHEBI:15378"/>
        <dbReference type="ChEBI" id="CHEBI:59874"/>
        <dbReference type="ChEBI" id="CHEBI:78442"/>
        <dbReference type="ChEBI" id="CHEBI:138191"/>
        <dbReference type="EC" id="3.1.1.29"/>
    </reaction>
</comment>
<comment type="subunit">
    <text evidence="1">Monomer.</text>
</comment>
<comment type="subcellular location">
    <subcellularLocation>
        <location evidence="1">Cytoplasm</location>
    </subcellularLocation>
</comment>
<comment type="similarity">
    <text evidence="1">Belongs to the PTH family.</text>
</comment>
<sequence length="207" mass="23078">MLILSGQGNPGAKYAKNRHNAGFLVIDRIHDAYGFGPWRTKFDAEISEGTVETANGRQRVLLIKPQTFYNETGRSVSKAVTFYKLQPEDVTVFHDEIDLAPGRLRVKRGGGHSGNNGARSMMAHLGENFRRIRIGVGHPGDKAMVMPHVLSDFHKVDLEWFEPMTEAVCKALPFLLAGDDERFQTEVMRLAPAPKHDPKQTARKGEA</sequence>
<gene>
    <name evidence="1" type="primary">pth</name>
    <name type="ordered locus">HNE_1396</name>
</gene>
<accession>Q0C2D0</accession>
<name>PTH_HYPNA</name>
<reference key="1">
    <citation type="journal article" date="2006" name="J. Bacteriol.">
        <title>Comparative genomic evidence for a close relationship between the dimorphic prosthecate bacteria Hyphomonas neptunium and Caulobacter crescentus.</title>
        <authorList>
            <person name="Badger J.H."/>
            <person name="Hoover T.R."/>
            <person name="Brun Y.V."/>
            <person name="Weiner R.M."/>
            <person name="Laub M.T."/>
            <person name="Alexandre G."/>
            <person name="Mrazek J."/>
            <person name="Ren Q."/>
            <person name="Paulsen I.T."/>
            <person name="Nelson K.E."/>
            <person name="Khouri H.M."/>
            <person name="Radune D."/>
            <person name="Sosa J."/>
            <person name="Dodson R.J."/>
            <person name="Sullivan S.A."/>
            <person name="Rosovitz M.J."/>
            <person name="Madupu R."/>
            <person name="Brinkac L.M."/>
            <person name="Durkin A.S."/>
            <person name="Daugherty S.C."/>
            <person name="Kothari S.P."/>
            <person name="Giglio M.G."/>
            <person name="Zhou L."/>
            <person name="Haft D.H."/>
            <person name="Selengut J.D."/>
            <person name="Davidsen T.M."/>
            <person name="Yang Q."/>
            <person name="Zafar N."/>
            <person name="Ward N.L."/>
        </authorList>
    </citation>
    <scope>NUCLEOTIDE SEQUENCE [LARGE SCALE GENOMIC DNA]</scope>
    <source>
        <strain>ATCC 15444</strain>
    </source>
</reference>
<proteinExistence type="inferred from homology"/>
<keyword id="KW-0963">Cytoplasm</keyword>
<keyword id="KW-0378">Hydrolase</keyword>
<keyword id="KW-1185">Reference proteome</keyword>
<keyword id="KW-0694">RNA-binding</keyword>
<keyword id="KW-0820">tRNA-binding</keyword>
<protein>
    <recommendedName>
        <fullName evidence="1">Peptidyl-tRNA hydrolase</fullName>
        <shortName evidence="1">Pth</shortName>
        <ecNumber evidence="1">3.1.1.29</ecNumber>
    </recommendedName>
</protein>
<feature type="chain" id="PRO_0000264048" description="Peptidyl-tRNA hydrolase">
    <location>
        <begin position="1"/>
        <end position="207"/>
    </location>
</feature>
<feature type="active site" description="Proton acceptor" evidence="1">
    <location>
        <position position="19"/>
    </location>
</feature>
<feature type="binding site" evidence="1">
    <location>
        <position position="14"/>
    </location>
    <ligand>
        <name>tRNA</name>
        <dbReference type="ChEBI" id="CHEBI:17843"/>
    </ligand>
</feature>
<feature type="binding site" evidence="1">
    <location>
        <position position="68"/>
    </location>
    <ligand>
        <name>tRNA</name>
        <dbReference type="ChEBI" id="CHEBI:17843"/>
    </ligand>
</feature>
<feature type="binding site" evidence="1">
    <location>
        <position position="70"/>
    </location>
    <ligand>
        <name>tRNA</name>
        <dbReference type="ChEBI" id="CHEBI:17843"/>
    </ligand>
</feature>
<feature type="binding site" evidence="1">
    <location>
        <position position="116"/>
    </location>
    <ligand>
        <name>tRNA</name>
        <dbReference type="ChEBI" id="CHEBI:17843"/>
    </ligand>
</feature>
<feature type="site" description="Discriminates between blocked and unblocked aminoacyl-tRNA" evidence="1">
    <location>
        <position position="9"/>
    </location>
</feature>
<feature type="site" description="Stabilizes the basic form of H active site to accept a proton" evidence="1">
    <location>
        <position position="95"/>
    </location>
</feature>
<organism>
    <name type="scientific">Hyphomonas neptunium (strain ATCC 15444)</name>
    <dbReference type="NCBI Taxonomy" id="228405"/>
    <lineage>
        <taxon>Bacteria</taxon>
        <taxon>Pseudomonadati</taxon>
        <taxon>Pseudomonadota</taxon>
        <taxon>Alphaproteobacteria</taxon>
        <taxon>Hyphomonadales</taxon>
        <taxon>Hyphomonadaceae</taxon>
        <taxon>Hyphomonas</taxon>
    </lineage>
</organism>
<evidence type="ECO:0000255" key="1">
    <source>
        <dbReference type="HAMAP-Rule" id="MF_00083"/>
    </source>
</evidence>